<evidence type="ECO:0000255" key="1">
    <source>
        <dbReference type="HAMAP-Rule" id="MF_01151"/>
    </source>
</evidence>
<dbReference type="EMBL" id="BA000011">
    <property type="protein sequence ID" value="BAB59630.1"/>
    <property type="molecule type" value="Genomic_DNA"/>
</dbReference>
<dbReference type="RefSeq" id="WP_010916747.1">
    <property type="nucleotide sequence ID" value="NC_002689.2"/>
</dbReference>
<dbReference type="SMR" id="Q97BG7"/>
<dbReference type="STRING" id="273116.gene:9381270"/>
<dbReference type="PaxDb" id="273116-14324703"/>
<dbReference type="GeneID" id="1441005"/>
<dbReference type="KEGG" id="tvo:TVG0473313"/>
<dbReference type="eggNOG" id="arCOG04772">
    <property type="taxonomic scope" value="Archaea"/>
</dbReference>
<dbReference type="HOGENOM" id="CLU_057217_5_2_2"/>
<dbReference type="OrthoDB" id="56041at2157"/>
<dbReference type="PhylomeDB" id="Q97BG7"/>
<dbReference type="Proteomes" id="UP000001017">
    <property type="component" value="Chromosome"/>
</dbReference>
<dbReference type="GO" id="GO:0005737">
    <property type="term" value="C:cytoplasm"/>
    <property type="evidence" value="ECO:0007669"/>
    <property type="project" value="UniProtKB-SubCell"/>
</dbReference>
<dbReference type="GO" id="GO:0000774">
    <property type="term" value="F:adenyl-nucleotide exchange factor activity"/>
    <property type="evidence" value="ECO:0007669"/>
    <property type="project" value="InterPro"/>
</dbReference>
<dbReference type="GO" id="GO:0042803">
    <property type="term" value="F:protein homodimerization activity"/>
    <property type="evidence" value="ECO:0007669"/>
    <property type="project" value="InterPro"/>
</dbReference>
<dbReference type="GO" id="GO:0051087">
    <property type="term" value="F:protein-folding chaperone binding"/>
    <property type="evidence" value="ECO:0007669"/>
    <property type="project" value="InterPro"/>
</dbReference>
<dbReference type="GO" id="GO:0051082">
    <property type="term" value="F:unfolded protein binding"/>
    <property type="evidence" value="ECO:0007669"/>
    <property type="project" value="TreeGrafter"/>
</dbReference>
<dbReference type="GO" id="GO:0006457">
    <property type="term" value="P:protein folding"/>
    <property type="evidence" value="ECO:0007669"/>
    <property type="project" value="InterPro"/>
</dbReference>
<dbReference type="CDD" id="cd00446">
    <property type="entry name" value="GrpE"/>
    <property type="match status" value="1"/>
</dbReference>
<dbReference type="Gene3D" id="3.90.20.20">
    <property type="match status" value="1"/>
</dbReference>
<dbReference type="Gene3D" id="2.30.22.10">
    <property type="entry name" value="Head domain of nucleotide exchange factor GrpE"/>
    <property type="match status" value="1"/>
</dbReference>
<dbReference type="HAMAP" id="MF_01151">
    <property type="entry name" value="GrpE"/>
    <property type="match status" value="1"/>
</dbReference>
<dbReference type="InterPro" id="IPR000740">
    <property type="entry name" value="GrpE"/>
</dbReference>
<dbReference type="InterPro" id="IPR013805">
    <property type="entry name" value="GrpE_coiled_coil"/>
</dbReference>
<dbReference type="InterPro" id="IPR009012">
    <property type="entry name" value="GrpE_head"/>
</dbReference>
<dbReference type="PANTHER" id="PTHR21237">
    <property type="entry name" value="GRPE PROTEIN"/>
    <property type="match status" value="1"/>
</dbReference>
<dbReference type="PANTHER" id="PTHR21237:SF23">
    <property type="entry name" value="GRPE PROTEIN HOMOLOG, MITOCHONDRIAL"/>
    <property type="match status" value="1"/>
</dbReference>
<dbReference type="Pfam" id="PF01025">
    <property type="entry name" value="GrpE"/>
    <property type="match status" value="1"/>
</dbReference>
<dbReference type="PRINTS" id="PR00773">
    <property type="entry name" value="GRPEPROTEIN"/>
</dbReference>
<dbReference type="SUPFAM" id="SSF58014">
    <property type="entry name" value="Coiled-coil domain of nucleotide exchange factor GrpE"/>
    <property type="match status" value="1"/>
</dbReference>
<dbReference type="SUPFAM" id="SSF51064">
    <property type="entry name" value="Head domain of nucleotide exchange factor GrpE"/>
    <property type="match status" value="1"/>
</dbReference>
<dbReference type="PROSITE" id="PS01071">
    <property type="entry name" value="GRPE"/>
    <property type="match status" value="1"/>
</dbReference>
<protein>
    <recommendedName>
        <fullName evidence="1">Protein GrpE</fullName>
    </recommendedName>
    <alternativeName>
        <fullName evidence="1">HSP-70 cofactor</fullName>
    </alternativeName>
</protein>
<accession>Q97BG7</accession>
<sequence>MYSPSSSNYIKDPISTEIIKSKTRNLKKRAEEAILYRSIAEQSSRKLAEISEAYKHKLADMENYLKIKDRETEIIRKNANESLIKDFLPVIDSMDAAIQAEKDNNLIRIRDQMLSILSKYGLQPIKAEGEKFDPYLHEAIGMTQDGEDGKIKYEVQRGYTLNNSVLRTSKVIVVKR</sequence>
<comment type="function">
    <text evidence="1">Participates actively in the response to hyperosmotic and heat shock by preventing the aggregation of stress-denatured proteins, in association with DnaK and GrpE. It is the nucleotide exchange factor for DnaK and may function as a thermosensor. Unfolded proteins bind initially to DnaJ; upon interaction with the DnaJ-bound protein, DnaK hydrolyzes its bound ATP, resulting in the formation of a stable complex. GrpE releases ADP from DnaK; ATP binding to DnaK triggers the release of the substrate protein, thus completing the reaction cycle. Several rounds of ATP-dependent interactions between DnaJ, DnaK and GrpE are required for fully efficient folding.</text>
</comment>
<comment type="subunit">
    <text evidence="1">Homodimer.</text>
</comment>
<comment type="subcellular location">
    <subcellularLocation>
        <location evidence="1">Cytoplasm</location>
    </subcellularLocation>
</comment>
<comment type="similarity">
    <text evidence="1">Belongs to the GrpE family.</text>
</comment>
<feature type="chain" id="PRO_0000113913" description="Protein GrpE">
    <location>
        <begin position="1"/>
        <end position="176"/>
    </location>
</feature>
<proteinExistence type="inferred from homology"/>
<gene>
    <name evidence="1" type="primary">grpE</name>
    <name type="ordered locus">TV0488</name>
    <name type="ORF">TVG0473313</name>
</gene>
<organism>
    <name type="scientific">Thermoplasma volcanium (strain ATCC 51530 / DSM 4299 / JCM 9571 / NBRC 15438 / GSS1)</name>
    <dbReference type="NCBI Taxonomy" id="273116"/>
    <lineage>
        <taxon>Archaea</taxon>
        <taxon>Methanobacteriati</taxon>
        <taxon>Thermoplasmatota</taxon>
        <taxon>Thermoplasmata</taxon>
        <taxon>Thermoplasmatales</taxon>
        <taxon>Thermoplasmataceae</taxon>
        <taxon>Thermoplasma</taxon>
    </lineage>
</organism>
<name>GRPE_THEVO</name>
<reference key="1">
    <citation type="journal article" date="2000" name="Proc. Natl. Acad. Sci. U.S.A.">
        <title>Archaeal adaptation to higher temperatures revealed by genomic sequence of Thermoplasma volcanium.</title>
        <authorList>
            <person name="Kawashima T."/>
            <person name="Amano N."/>
            <person name="Koike H."/>
            <person name="Makino S."/>
            <person name="Higuchi S."/>
            <person name="Kawashima-Ohya Y."/>
            <person name="Watanabe K."/>
            <person name="Yamazaki M."/>
            <person name="Kanehori K."/>
            <person name="Kawamoto T."/>
            <person name="Nunoshiba T."/>
            <person name="Yamamoto Y."/>
            <person name="Aramaki H."/>
            <person name="Makino K."/>
            <person name="Suzuki M."/>
        </authorList>
    </citation>
    <scope>NUCLEOTIDE SEQUENCE [LARGE SCALE GENOMIC DNA]</scope>
    <source>
        <strain>ATCC 51530 / DSM 4299 / JCM 9571 / NBRC 15438 / GSS1</strain>
    </source>
</reference>
<keyword id="KW-0143">Chaperone</keyword>
<keyword id="KW-0963">Cytoplasm</keyword>
<keyword id="KW-0346">Stress response</keyword>